<sequence length="139" mass="15063">MMQSTFAIIKPDAVSRQLTGEILAAMEASGLKIVALKRLHLSKAQAAGFYAVHRERPFFDSLTDYMSSGPVVCVVLRGEDAVPRWRALMGATNPAQAEPGTLRARYGQSLEANAVHGSDAQETAAFEIGYFFNGLEISE</sequence>
<name>NDK_DESDA</name>
<proteinExistence type="inferred from homology"/>
<organism>
    <name type="scientific">Desulfovibrio desulfuricans (strain ATCC 27774 / DSM 6949 / MB)</name>
    <dbReference type="NCBI Taxonomy" id="525146"/>
    <lineage>
        <taxon>Bacteria</taxon>
        <taxon>Pseudomonadati</taxon>
        <taxon>Thermodesulfobacteriota</taxon>
        <taxon>Desulfovibrionia</taxon>
        <taxon>Desulfovibrionales</taxon>
        <taxon>Desulfovibrionaceae</taxon>
        <taxon>Desulfovibrio</taxon>
    </lineage>
</organism>
<protein>
    <recommendedName>
        <fullName evidence="1">Nucleoside diphosphate kinase</fullName>
        <shortName evidence="1">NDK</shortName>
        <shortName evidence="1">NDP kinase</shortName>
        <ecNumber evidence="1">2.7.4.6</ecNumber>
    </recommendedName>
    <alternativeName>
        <fullName evidence="1">Nucleoside-2-P kinase</fullName>
    </alternativeName>
</protein>
<feature type="chain" id="PRO_1000135250" description="Nucleoside diphosphate kinase">
    <location>
        <begin position="1"/>
        <end position="139"/>
    </location>
</feature>
<feature type="active site" description="Pros-phosphohistidine intermediate" evidence="1">
    <location>
        <position position="116"/>
    </location>
</feature>
<feature type="binding site" evidence="1">
    <location>
        <position position="10"/>
    </location>
    <ligand>
        <name>ATP</name>
        <dbReference type="ChEBI" id="CHEBI:30616"/>
    </ligand>
</feature>
<feature type="binding site" evidence="1">
    <location>
        <position position="58"/>
    </location>
    <ligand>
        <name>ATP</name>
        <dbReference type="ChEBI" id="CHEBI:30616"/>
    </ligand>
</feature>
<feature type="binding site" evidence="1">
    <location>
        <position position="86"/>
    </location>
    <ligand>
        <name>ATP</name>
        <dbReference type="ChEBI" id="CHEBI:30616"/>
    </ligand>
</feature>
<feature type="binding site" evidence="1">
    <location>
        <position position="92"/>
    </location>
    <ligand>
        <name>ATP</name>
        <dbReference type="ChEBI" id="CHEBI:30616"/>
    </ligand>
</feature>
<feature type="binding site" evidence="1">
    <location>
        <position position="103"/>
    </location>
    <ligand>
        <name>ATP</name>
        <dbReference type="ChEBI" id="CHEBI:30616"/>
    </ligand>
</feature>
<feature type="binding site" evidence="1">
    <location>
        <position position="113"/>
    </location>
    <ligand>
        <name>ATP</name>
        <dbReference type="ChEBI" id="CHEBI:30616"/>
    </ligand>
</feature>
<accession>B8IZ74</accession>
<comment type="function">
    <text evidence="1">Major role in the synthesis of nucleoside triphosphates other than ATP. The ATP gamma phosphate is transferred to the NDP beta phosphate via a ping-pong mechanism, using a phosphorylated active-site intermediate.</text>
</comment>
<comment type="catalytic activity">
    <reaction evidence="1">
        <text>a 2'-deoxyribonucleoside 5'-diphosphate + ATP = a 2'-deoxyribonucleoside 5'-triphosphate + ADP</text>
        <dbReference type="Rhea" id="RHEA:44640"/>
        <dbReference type="ChEBI" id="CHEBI:30616"/>
        <dbReference type="ChEBI" id="CHEBI:61560"/>
        <dbReference type="ChEBI" id="CHEBI:73316"/>
        <dbReference type="ChEBI" id="CHEBI:456216"/>
        <dbReference type="EC" id="2.7.4.6"/>
    </reaction>
</comment>
<comment type="catalytic activity">
    <reaction evidence="1">
        <text>a ribonucleoside 5'-diphosphate + ATP = a ribonucleoside 5'-triphosphate + ADP</text>
        <dbReference type="Rhea" id="RHEA:18113"/>
        <dbReference type="ChEBI" id="CHEBI:30616"/>
        <dbReference type="ChEBI" id="CHEBI:57930"/>
        <dbReference type="ChEBI" id="CHEBI:61557"/>
        <dbReference type="ChEBI" id="CHEBI:456216"/>
        <dbReference type="EC" id="2.7.4.6"/>
    </reaction>
</comment>
<comment type="cofactor">
    <cofactor evidence="1">
        <name>Mg(2+)</name>
        <dbReference type="ChEBI" id="CHEBI:18420"/>
    </cofactor>
</comment>
<comment type="subunit">
    <text evidence="1">Homotetramer.</text>
</comment>
<comment type="subcellular location">
    <subcellularLocation>
        <location evidence="1">Cytoplasm</location>
    </subcellularLocation>
</comment>
<comment type="similarity">
    <text evidence="1">Belongs to the NDK family.</text>
</comment>
<evidence type="ECO:0000255" key="1">
    <source>
        <dbReference type="HAMAP-Rule" id="MF_00451"/>
    </source>
</evidence>
<keyword id="KW-0067">ATP-binding</keyword>
<keyword id="KW-0963">Cytoplasm</keyword>
<keyword id="KW-0418">Kinase</keyword>
<keyword id="KW-0460">Magnesium</keyword>
<keyword id="KW-0479">Metal-binding</keyword>
<keyword id="KW-0546">Nucleotide metabolism</keyword>
<keyword id="KW-0547">Nucleotide-binding</keyword>
<keyword id="KW-0597">Phosphoprotein</keyword>
<keyword id="KW-0808">Transferase</keyword>
<dbReference type="EC" id="2.7.4.6" evidence="1"/>
<dbReference type="EMBL" id="CP001358">
    <property type="protein sequence ID" value="ACL48801.1"/>
    <property type="molecule type" value="Genomic_DNA"/>
</dbReference>
<dbReference type="SMR" id="B8IZ74"/>
<dbReference type="STRING" id="525146.Ddes_0894"/>
<dbReference type="KEGG" id="dds:Ddes_0894"/>
<dbReference type="eggNOG" id="COG0105">
    <property type="taxonomic scope" value="Bacteria"/>
</dbReference>
<dbReference type="HOGENOM" id="CLU_060216_8_1_7"/>
<dbReference type="GO" id="GO:0005737">
    <property type="term" value="C:cytoplasm"/>
    <property type="evidence" value="ECO:0007669"/>
    <property type="project" value="UniProtKB-SubCell"/>
</dbReference>
<dbReference type="GO" id="GO:0005524">
    <property type="term" value="F:ATP binding"/>
    <property type="evidence" value="ECO:0007669"/>
    <property type="project" value="UniProtKB-UniRule"/>
</dbReference>
<dbReference type="GO" id="GO:0046872">
    <property type="term" value="F:metal ion binding"/>
    <property type="evidence" value="ECO:0007669"/>
    <property type="project" value="UniProtKB-KW"/>
</dbReference>
<dbReference type="GO" id="GO:0004550">
    <property type="term" value="F:nucleoside diphosphate kinase activity"/>
    <property type="evidence" value="ECO:0007669"/>
    <property type="project" value="UniProtKB-UniRule"/>
</dbReference>
<dbReference type="GO" id="GO:0006241">
    <property type="term" value="P:CTP biosynthetic process"/>
    <property type="evidence" value="ECO:0007669"/>
    <property type="project" value="UniProtKB-UniRule"/>
</dbReference>
<dbReference type="GO" id="GO:0006183">
    <property type="term" value="P:GTP biosynthetic process"/>
    <property type="evidence" value="ECO:0007669"/>
    <property type="project" value="UniProtKB-UniRule"/>
</dbReference>
<dbReference type="GO" id="GO:0006228">
    <property type="term" value="P:UTP biosynthetic process"/>
    <property type="evidence" value="ECO:0007669"/>
    <property type="project" value="UniProtKB-UniRule"/>
</dbReference>
<dbReference type="CDD" id="cd04413">
    <property type="entry name" value="NDPk_I"/>
    <property type="match status" value="1"/>
</dbReference>
<dbReference type="FunFam" id="3.30.70.141:FF:000003">
    <property type="entry name" value="Nucleoside diphosphate kinase"/>
    <property type="match status" value="1"/>
</dbReference>
<dbReference type="Gene3D" id="3.30.70.141">
    <property type="entry name" value="Nucleoside diphosphate kinase-like domain"/>
    <property type="match status" value="1"/>
</dbReference>
<dbReference type="HAMAP" id="MF_00451">
    <property type="entry name" value="NDP_kinase"/>
    <property type="match status" value="1"/>
</dbReference>
<dbReference type="InterPro" id="IPR034907">
    <property type="entry name" value="NDK-like_dom"/>
</dbReference>
<dbReference type="InterPro" id="IPR036850">
    <property type="entry name" value="NDK-like_dom_sf"/>
</dbReference>
<dbReference type="InterPro" id="IPR001564">
    <property type="entry name" value="Nucleoside_diP_kinase"/>
</dbReference>
<dbReference type="NCBIfam" id="NF001908">
    <property type="entry name" value="PRK00668.1"/>
    <property type="match status" value="1"/>
</dbReference>
<dbReference type="PANTHER" id="PTHR46161">
    <property type="entry name" value="NUCLEOSIDE DIPHOSPHATE KINASE"/>
    <property type="match status" value="1"/>
</dbReference>
<dbReference type="PANTHER" id="PTHR46161:SF3">
    <property type="entry name" value="NUCLEOSIDE DIPHOSPHATE KINASE DDB_G0292928-RELATED"/>
    <property type="match status" value="1"/>
</dbReference>
<dbReference type="Pfam" id="PF00334">
    <property type="entry name" value="NDK"/>
    <property type="match status" value="1"/>
</dbReference>
<dbReference type="PRINTS" id="PR01243">
    <property type="entry name" value="NUCDPKINASE"/>
</dbReference>
<dbReference type="SMART" id="SM00562">
    <property type="entry name" value="NDK"/>
    <property type="match status" value="1"/>
</dbReference>
<dbReference type="SUPFAM" id="SSF54919">
    <property type="entry name" value="Nucleoside diphosphate kinase, NDK"/>
    <property type="match status" value="1"/>
</dbReference>
<dbReference type="PROSITE" id="PS51374">
    <property type="entry name" value="NDPK_LIKE"/>
    <property type="match status" value="1"/>
</dbReference>
<gene>
    <name evidence="1" type="primary">ndk</name>
    <name type="ordered locus">Ddes_0894</name>
</gene>
<reference key="1">
    <citation type="submission" date="2009-01" db="EMBL/GenBank/DDBJ databases">
        <title>Complete sequence of Desulfovibrio desulfuricans subsp. desulfuricans str. ATCC 27774.</title>
        <authorList>
            <consortium name="US DOE Joint Genome Institute"/>
            <person name="Lucas S."/>
            <person name="Copeland A."/>
            <person name="Lapidus A."/>
            <person name="Glavina del Rio T."/>
            <person name="Tice H."/>
            <person name="Bruce D."/>
            <person name="Goodwin L."/>
            <person name="Pitluck S."/>
            <person name="Sims D."/>
            <person name="Lu M."/>
            <person name="Kiss H."/>
            <person name="Meineke L."/>
            <person name="Brettin T."/>
            <person name="Detter J.C."/>
            <person name="Han C."/>
            <person name="Larimer F."/>
            <person name="Land M."/>
            <person name="Hauser L."/>
            <person name="Kyrpides N."/>
            <person name="Ovchinnikova G."/>
            <person name="Hazen T.C."/>
        </authorList>
    </citation>
    <scope>NUCLEOTIDE SEQUENCE [LARGE SCALE GENOMIC DNA]</scope>
    <source>
        <strain>ATCC 27774 / DSM 6949 / MB</strain>
    </source>
</reference>